<sequence>MVADEEAQLHAQAWDHALSYIKPTALSAAVELEIPDILENHGGPMTLSELSAASGCPREPLYRLMRFLIFHGIFTKSDDCYAQSPLSRLFTTENLGPYMLMQATPVTRCPTGLSGEALKTGTSLYLKSIRGEDSWSDPAYGYHMKAFTNAMTAHARLTAAAIVRNYPAAFDGVQSVVDVGSRHGTAIGKLVEAFPWVRGIAFDLPEIVADAPPRKGVDFVGGDMFESVPKADAVMLMWILHDWSDDKCIEILKKCKEAIPANIGKVMIVDAIINEDGEGDEFSGTRLSLDMIMLAVMAQGKERTYKEWVHLLNEAGFSKHTIKNIKAMEFVIEAYP</sequence>
<proteinExistence type="evidence at protein level"/>
<name>FOMT5_OCIBA</name>
<feature type="chain" id="PRO_0000456918" description="Flavonoid 4'-O-methyltransferase 5">
    <location>
        <begin position="1"/>
        <end position="336"/>
    </location>
</feature>
<feature type="active site" description="Proton acceptor" evidence="2">
    <location>
        <position position="241"/>
    </location>
</feature>
<feature type="binding site" evidence="2">
    <location>
        <position position="140"/>
    </location>
    <ligand>
        <name>S-adenosyl-L-methionine</name>
        <dbReference type="ChEBI" id="CHEBI:59789"/>
    </ligand>
</feature>
<feature type="binding site" evidence="2">
    <location>
        <position position="203"/>
    </location>
    <ligand>
        <name>S-adenosyl-L-methionine</name>
        <dbReference type="ChEBI" id="CHEBI:59789"/>
    </ligand>
</feature>
<feature type="mutagenesis site" description="Increased ability to produce scutellarein-6-methyl ether (SCU6Me) from scutellarein (SCU) and acquired ability to synthesize pectolinarigenin (PECTOLI) from SCU; when associated with A-111. Increased ability to use cirsimaritin (CIRM) as substrate and to produce SCU6Me from SCU, acquired ability to synthesize PECTOLI from SCU, but slightly reduced efficiency toward scutellarein-7-methyl ether (SCU7Me); when associated with A-111 and G-181." evidence="3">
    <original>C</original>
    <variation>S</variation>
    <location>
        <position position="109"/>
    </location>
</feature>
<feature type="mutagenesis site" description="Increased ability to produce scutellarein-6-methyl ether (SCU6Me) from scutellarein (SCU) and acquired ability to synthesize pectolinarigenin (PECTOLI) from SCU; when associated with S-109. Increased ability to use cirsimaritin (CIRM) as substrate and to produce SCU6Me from SCU, acquired ability to synthesize PECTOLI from SCU, but slightly reduced efficiency toward scutellarein-7-methyl ether (SCU7Me); when associated with S-109 and G-181." evidence="3">
    <original>T</original>
    <variation>A</variation>
    <location>
        <position position="111"/>
    </location>
</feature>
<feature type="mutagenesis site" description="Increased ability to use cirsimaritin (CIRM) as substrate and to produce scutellarein-6-methyl ether (SCU6Me) from scutellarein (SCU), acquired ability to synthesize pectolinarigenin (PECTOLI) from SCU, but slightly reduced efficiency toward scutellarein-7-methyl ether (SCU7Me); when associated with S-109 and A-111." evidence="3">
    <original>S</original>
    <variation>G</variation>
    <location>
        <position position="181"/>
    </location>
</feature>
<evidence type="ECO:0000250" key="1">
    <source>
        <dbReference type="UniProtKB" id="Q7XB10"/>
    </source>
</evidence>
<evidence type="ECO:0000255" key="2">
    <source>
        <dbReference type="PROSITE-ProRule" id="PRU01020"/>
    </source>
</evidence>
<evidence type="ECO:0000269" key="3">
    <source>
    </source>
</evidence>
<evidence type="ECO:0000269" key="4">
    <source>
    </source>
</evidence>
<evidence type="ECO:0000303" key="5">
    <source>
    </source>
</evidence>
<evidence type="ECO:0000303" key="6">
    <source>
    </source>
</evidence>
<evidence type="ECO:0000305" key="7">
    <source>
    </source>
</evidence>
<gene>
    <name evidence="5" type="primary">FOMT5</name>
</gene>
<dbReference type="EC" id="2.1.1.-" evidence="2 3"/>
<dbReference type="EMBL" id="JQ653279">
    <property type="protein sequence ID" value="AFU50299.1"/>
    <property type="molecule type" value="mRNA"/>
</dbReference>
<dbReference type="SMR" id="K0ICR0"/>
<dbReference type="BRENDA" id="2.1.1.75">
    <property type="organism ID" value="4385"/>
</dbReference>
<dbReference type="GO" id="GO:0008171">
    <property type="term" value="F:O-methyltransferase activity"/>
    <property type="evidence" value="ECO:0007669"/>
    <property type="project" value="InterPro"/>
</dbReference>
<dbReference type="GO" id="GO:0046983">
    <property type="term" value="F:protein dimerization activity"/>
    <property type="evidence" value="ECO:0007669"/>
    <property type="project" value="InterPro"/>
</dbReference>
<dbReference type="GO" id="GO:0032259">
    <property type="term" value="P:methylation"/>
    <property type="evidence" value="ECO:0007669"/>
    <property type="project" value="UniProtKB-KW"/>
</dbReference>
<dbReference type="Gene3D" id="3.40.50.150">
    <property type="entry name" value="Vaccinia Virus protein VP39"/>
    <property type="match status" value="1"/>
</dbReference>
<dbReference type="Gene3D" id="1.10.10.10">
    <property type="entry name" value="Winged helix-like DNA-binding domain superfamily/Winged helix DNA-binding domain"/>
    <property type="match status" value="1"/>
</dbReference>
<dbReference type="InterPro" id="IPR016461">
    <property type="entry name" value="COMT-like"/>
</dbReference>
<dbReference type="InterPro" id="IPR001077">
    <property type="entry name" value="O_MeTrfase_dom"/>
</dbReference>
<dbReference type="InterPro" id="IPR012967">
    <property type="entry name" value="Plant_O-MeTrfase_dimerisation"/>
</dbReference>
<dbReference type="InterPro" id="IPR029063">
    <property type="entry name" value="SAM-dependent_MTases_sf"/>
</dbReference>
<dbReference type="InterPro" id="IPR036388">
    <property type="entry name" value="WH-like_DNA-bd_sf"/>
</dbReference>
<dbReference type="InterPro" id="IPR036390">
    <property type="entry name" value="WH_DNA-bd_sf"/>
</dbReference>
<dbReference type="PANTHER" id="PTHR11746">
    <property type="entry name" value="O-METHYLTRANSFERASE"/>
    <property type="match status" value="1"/>
</dbReference>
<dbReference type="Pfam" id="PF08100">
    <property type="entry name" value="Dimerisation"/>
    <property type="match status" value="1"/>
</dbReference>
<dbReference type="Pfam" id="PF00891">
    <property type="entry name" value="Methyltransf_2"/>
    <property type="match status" value="1"/>
</dbReference>
<dbReference type="PIRSF" id="PIRSF005739">
    <property type="entry name" value="O-mtase"/>
    <property type="match status" value="1"/>
</dbReference>
<dbReference type="SUPFAM" id="SSF53335">
    <property type="entry name" value="S-adenosyl-L-methionine-dependent methyltransferases"/>
    <property type="match status" value="1"/>
</dbReference>
<dbReference type="SUPFAM" id="SSF46785">
    <property type="entry name" value="Winged helix' DNA-binding domain"/>
    <property type="match status" value="1"/>
</dbReference>
<dbReference type="PROSITE" id="PS51683">
    <property type="entry name" value="SAM_OMT_II"/>
    <property type="match status" value="1"/>
</dbReference>
<keyword id="KW-0489">Methyltransferase</keyword>
<keyword id="KW-0949">S-adenosyl-L-methionine</keyword>
<keyword id="KW-0808">Transferase</keyword>
<reference key="1">
    <citation type="journal article" date="2012" name="Plant Physiol.">
        <title>A set of regioselective O-methyltransferases gives rise to the complex pattern of methoxylated flavones in sweet basil.</title>
        <authorList>
            <person name="Berim A."/>
            <person name="Hyatt D.C."/>
            <person name="Gang D.R."/>
        </authorList>
    </citation>
    <scope>NUCLEOTIDE SEQUENCE [MRNA]</scope>
    <scope>FUNCTION</scope>
    <scope>MUTAGENESIS OF CYS-109; THR-111 AND SER-181</scope>
    <scope>CATALYTIC ACTIVITY</scope>
    <scope>BIOPHYSICOCHEMICAL PROPERTIES</scope>
    <scope>TISSUE SPECIFICITY</scope>
    <scope>DEVELOPMENTAL STAGE</scope>
    <scope>ACTIVITY REGULATION</scope>
    <source>
        <strain>cv. EMX-1</strain>
        <strain>cv. SD</strain>
        <tissue>Peltate glandular trichome</tissue>
    </source>
</reference>
<reference key="2">
    <citation type="journal article" date="2018" name="Int. J. Biol. Macromol.">
        <title>Nevadensin is a naturally occurring selective inhibitor of human carboxylesterase 1.</title>
        <authorList>
            <person name="Wang Y.-Q."/>
            <person name="Weng Z.-M."/>
            <person name="Dou T.-Y."/>
            <person name="Hou J."/>
            <person name="Wang D.-D."/>
            <person name="Ding L.-L."/>
            <person name="Zou L.-W."/>
            <person name="Yu Y."/>
            <person name="Chen J."/>
            <person name="Tang H."/>
            <person name="Ge G.-B."/>
        </authorList>
    </citation>
    <scope>BIOTECHNOLOGY</scope>
</reference>
<reference key="3">
    <citation type="journal article" date="2019" name="Nat. Prod. Rep.">
        <title>Non-volatile natural products in plant glandular trichomes: chemistry, biological activities and biosynthesis.</title>
        <authorList>
            <person name="Liu Y."/>
            <person name="Jing S.-X."/>
            <person name="Luo S.-H."/>
            <person name="Li S.-H."/>
        </authorList>
    </citation>
    <scope>PATHWAY</scope>
    <scope>REVIEW</scope>
</reference>
<comment type="function">
    <text evidence="3">Flavonoid 4'-O-methyltransferase involved in the biosynthesis of polymethoxylated flavonoids natural products such as nevadensin and salvigenin, aroma compounds which contribute to the flavor of sweet basil, and exhibit pharmacological activities such as anti-allergic, anti-oxidant, antibacterial, anti-proliferative, and anti-inflammatory effects (PubMed:22923679). Catalyzes S-adenosylmethionine-dependent regioselective 4'-O-methylation of flavonoids; active on various hydroxylated flavonoid substrates, including scutellarein-7-methyl ether (SCU7Me) and, with a lower efficiency, cirsimaritin (CIRM), sakuranetin (NAR7Me), ladanein (LAD) and genkwanin (GENK) (PubMed:22923679).</text>
</comment>
<comment type="catalytic activity">
    <reaction evidence="3">
        <text>genkwanin + S-adenosyl-L-methionine = apigenin 4',7-dimethyl ether + S-adenosyl-L-homocysteine</text>
        <dbReference type="Rhea" id="RHEA:73263"/>
        <dbReference type="ChEBI" id="CHEBI:2769"/>
        <dbReference type="ChEBI" id="CHEBI:57856"/>
        <dbReference type="ChEBI" id="CHEBI:59789"/>
        <dbReference type="ChEBI" id="CHEBI:192700"/>
    </reaction>
    <physiologicalReaction direction="left-to-right" evidence="7">
        <dbReference type="Rhea" id="RHEA:73264"/>
    </physiologicalReaction>
</comment>
<comment type="catalytic activity">
    <reaction evidence="3">
        <text>cirsiliol + S-adenosyl-L-methionine = eupatorin + S-adenosyl-L-homocysteine + H(+)</text>
        <dbReference type="Rhea" id="RHEA:73259"/>
        <dbReference type="ChEBI" id="CHEBI:3719"/>
        <dbReference type="ChEBI" id="CHEBI:15378"/>
        <dbReference type="ChEBI" id="CHEBI:57856"/>
        <dbReference type="ChEBI" id="CHEBI:59789"/>
        <dbReference type="ChEBI" id="CHEBI:136666"/>
    </reaction>
    <physiologicalReaction direction="left-to-right" evidence="7">
        <dbReference type="Rhea" id="RHEA:73260"/>
    </physiologicalReaction>
</comment>
<comment type="catalytic activity">
    <reaction evidence="3">
        <text>cirsimaritin + S-adenosyl-L-methionine = salvigenin + S-adenosyl-L-homocysteine + H(+)</text>
        <dbReference type="Rhea" id="RHEA:73251"/>
        <dbReference type="ChEBI" id="CHEBI:15378"/>
        <dbReference type="ChEBI" id="CHEBI:57856"/>
        <dbReference type="ChEBI" id="CHEBI:59789"/>
        <dbReference type="ChEBI" id="CHEBI:81337"/>
        <dbReference type="ChEBI" id="CHEBI:192703"/>
    </reaction>
    <physiologicalReaction direction="left-to-right" evidence="7">
        <dbReference type="Rhea" id="RHEA:73252"/>
    </physiologicalReaction>
</comment>
<comment type="catalytic activity">
    <reaction evidence="3">
        <text>scutellarein 7-methyl ether + S-adenosyl-L-methionine = ladanein + S-adenosyl-L-homocysteine + H(+)</text>
        <dbReference type="Rhea" id="RHEA:73239"/>
        <dbReference type="ChEBI" id="CHEBI:15378"/>
        <dbReference type="ChEBI" id="CHEBI:57856"/>
        <dbReference type="ChEBI" id="CHEBI:59789"/>
        <dbReference type="ChEBI" id="CHEBI:192701"/>
        <dbReference type="ChEBI" id="CHEBI:192702"/>
    </reaction>
    <physiologicalReaction direction="left-to-right" evidence="7">
        <dbReference type="Rhea" id="RHEA:73240"/>
    </physiologicalReaction>
</comment>
<comment type="catalytic activity">
    <reaction evidence="3">
        <text>(2S)-sakuranetin + S-adenosyl-L-methionine = (2S)-naringenin 4',7-dimethyl ether + S-adenosyl-L-homocysteine + H(+)</text>
        <dbReference type="Rhea" id="RHEA:73255"/>
        <dbReference type="ChEBI" id="CHEBI:15378"/>
        <dbReference type="ChEBI" id="CHEBI:28927"/>
        <dbReference type="ChEBI" id="CHEBI:57856"/>
        <dbReference type="ChEBI" id="CHEBI:59789"/>
        <dbReference type="ChEBI" id="CHEBI:192816"/>
    </reaction>
    <physiologicalReaction direction="left-to-right" evidence="7">
        <dbReference type="Rhea" id="RHEA:73256"/>
    </physiologicalReaction>
</comment>
<comment type="activity regulation">
    <text evidence="3">Substrate inhibition by genkwanin (GENK) at concentrations above 10 mM.</text>
</comment>
<comment type="biophysicochemical properties">
    <kinetics>
        <KM evidence="3">36 nM for scutellarein-7-methyl ether (in the presence of S-adenosyl-L-methionine)</KM>
        <KM evidence="3">87 nM for cirsimaritin (in the presence of S-adenosyl-L-methionine)</KM>
        <KM evidence="3">130 nM for genkwanin (in the presence of S-adenosyl-L-methionine)</KM>
        <KM evidence="3">41 uM for S-adenosyl-L-methionine (in the presence of cirsimaritin)</KM>
        <text evidence="3">kcat is 66x10(-3) sec(-1) with scutellarein-7-methyl ether as substrate (in the presence of S-adenosyl-L-methionine) (PubMed:22923679). kcat is 50x10(-3) sec(-1) with cirsimaritin as substrate (in the presence of S-adenosyl-L-methionine) (PubMed:22923679). kcat is 72x10(-3) sec(-1) with genkwanin as substrate (in the presence of S-adenosyl-L-methionine) (PubMed:22923679).</text>
    </kinetics>
</comment>
<comment type="pathway">
    <text evidence="6">Flavonoid metabolism.</text>
</comment>
<comment type="subunit">
    <text evidence="1">Homodimer.</text>
</comment>
<comment type="tissue specificity">
    <text evidence="3">Expressed in leaves.</text>
</comment>
<comment type="developmental stage">
    <text evidence="3">Accumulates in young leaves but fades out during leaves aging.</text>
</comment>
<comment type="biotechnology">
    <text evidence="4">Nevadensin is a selective inhibitor of human carboxylesterase 1 (hCE-1), a key enzyme responsible for the hydrolysis of a wide range of endogenous and xenobiotic esters.</text>
</comment>
<comment type="similarity">
    <text evidence="2">Belongs to the class I-like SAM-binding methyltransferase superfamily. Cation-independent O-methyltransferase family.</text>
</comment>
<organism>
    <name type="scientific">Ocimum basilicum</name>
    <name type="common">Sweet basil</name>
    <dbReference type="NCBI Taxonomy" id="39350"/>
    <lineage>
        <taxon>Eukaryota</taxon>
        <taxon>Viridiplantae</taxon>
        <taxon>Streptophyta</taxon>
        <taxon>Embryophyta</taxon>
        <taxon>Tracheophyta</taxon>
        <taxon>Spermatophyta</taxon>
        <taxon>Magnoliopsida</taxon>
        <taxon>eudicotyledons</taxon>
        <taxon>Gunneridae</taxon>
        <taxon>Pentapetalae</taxon>
        <taxon>asterids</taxon>
        <taxon>lamiids</taxon>
        <taxon>Lamiales</taxon>
        <taxon>Lamiaceae</taxon>
        <taxon>Nepetoideae</taxon>
        <taxon>Ocimeae</taxon>
        <taxon>Ociminae</taxon>
        <taxon>Ocimum</taxon>
    </lineage>
</organism>
<accession>K0ICR0</accession>
<protein>
    <recommendedName>
        <fullName evidence="5">Flavonoid 4'-O-methyltransferase 5</fullName>
        <shortName evidence="5">ObFOMT5</shortName>
        <ecNumber evidence="2 3">2.1.1.-</ecNumber>
    </recommendedName>
    <alternativeName>
        <fullName evidence="7">Cirsiliol 4'-O-methyltransferase</fullName>
        <ecNumber evidence="3">2.1.1.-</ecNumber>
    </alternativeName>
    <alternativeName>
        <fullName evidence="7">Cirsimaritin 4'-O-methyltransferase</fullName>
        <ecNumber evidence="3">2.1.1.-</ecNumber>
    </alternativeName>
    <alternativeName>
        <fullName evidence="7">Genkwanin 4'-O-methyltransferase</fullName>
        <ecNumber evidence="3">2.1.1.-</ecNumber>
    </alternativeName>
    <alternativeName>
        <fullName evidence="7">Sakuranetin 4'-O-methyltransferase</fullName>
        <ecNumber evidence="3">2.1.1.-</ecNumber>
    </alternativeName>
    <alternativeName>
        <fullName evidence="7">Scutellarein-7-methyl ether 4'-O-methyltransferase</fullName>
        <ecNumber evidence="3">2.1.1.-</ecNumber>
    </alternativeName>
</protein>